<name>RL35_HAEDU</name>
<reference key="1">
    <citation type="submission" date="2003-06" db="EMBL/GenBank/DDBJ databases">
        <title>The complete genome sequence of Haemophilus ducreyi.</title>
        <authorList>
            <person name="Munson R.S. Jr."/>
            <person name="Ray W.C."/>
            <person name="Mahairas G."/>
            <person name="Sabo P."/>
            <person name="Mungur R."/>
            <person name="Johnson L."/>
            <person name="Nguyen D."/>
            <person name="Wang J."/>
            <person name="Forst C."/>
            <person name="Hood L."/>
        </authorList>
    </citation>
    <scope>NUCLEOTIDE SEQUENCE [LARGE SCALE GENOMIC DNA]</scope>
    <source>
        <strain>35000HP / ATCC 700724</strain>
    </source>
</reference>
<protein>
    <recommendedName>
        <fullName evidence="1">Large ribosomal subunit protein bL35</fullName>
    </recommendedName>
    <alternativeName>
        <fullName evidence="3">50S ribosomal protein L35</fullName>
    </alternativeName>
</protein>
<sequence length="65" mass="7385">MPKIKTVRGAAKRFKKTASGGFKRKQSHLRHILTKKTTKRKRHLCHKSMVAKADQVLVVACLPYA</sequence>
<evidence type="ECO:0000255" key="1">
    <source>
        <dbReference type="HAMAP-Rule" id="MF_00514"/>
    </source>
</evidence>
<evidence type="ECO:0000256" key="2">
    <source>
        <dbReference type="SAM" id="MobiDB-lite"/>
    </source>
</evidence>
<evidence type="ECO:0000305" key="3"/>
<comment type="similarity">
    <text evidence="1">Belongs to the bacterial ribosomal protein bL35 family.</text>
</comment>
<feature type="chain" id="PRO_0000177365" description="Large ribosomal subunit protein bL35">
    <location>
        <begin position="1"/>
        <end position="65"/>
    </location>
</feature>
<feature type="region of interest" description="Disordered" evidence="2">
    <location>
        <begin position="1"/>
        <end position="26"/>
    </location>
</feature>
<feature type="compositionally biased region" description="Basic residues" evidence="2">
    <location>
        <begin position="10"/>
        <end position="26"/>
    </location>
</feature>
<proteinExistence type="inferred from homology"/>
<dbReference type="EMBL" id="AE017143">
    <property type="protein sequence ID" value="AAP96551.1"/>
    <property type="molecule type" value="Genomic_DNA"/>
</dbReference>
<dbReference type="RefSeq" id="WP_010945580.1">
    <property type="nucleotide sequence ID" value="NC_002940.2"/>
</dbReference>
<dbReference type="SMR" id="Q7VKS1"/>
<dbReference type="STRING" id="233412.HD_1800"/>
<dbReference type="KEGG" id="hdu:HD_1800"/>
<dbReference type="eggNOG" id="COG0291">
    <property type="taxonomic scope" value="Bacteria"/>
</dbReference>
<dbReference type="HOGENOM" id="CLU_169643_1_1_6"/>
<dbReference type="Proteomes" id="UP000001022">
    <property type="component" value="Chromosome"/>
</dbReference>
<dbReference type="GO" id="GO:0022625">
    <property type="term" value="C:cytosolic large ribosomal subunit"/>
    <property type="evidence" value="ECO:0007669"/>
    <property type="project" value="TreeGrafter"/>
</dbReference>
<dbReference type="GO" id="GO:0003735">
    <property type="term" value="F:structural constituent of ribosome"/>
    <property type="evidence" value="ECO:0007669"/>
    <property type="project" value="InterPro"/>
</dbReference>
<dbReference type="GO" id="GO:0006412">
    <property type="term" value="P:translation"/>
    <property type="evidence" value="ECO:0007669"/>
    <property type="project" value="UniProtKB-UniRule"/>
</dbReference>
<dbReference type="FunFam" id="4.10.410.60:FF:000001">
    <property type="entry name" value="50S ribosomal protein L35"/>
    <property type="match status" value="1"/>
</dbReference>
<dbReference type="Gene3D" id="4.10.410.60">
    <property type="match status" value="1"/>
</dbReference>
<dbReference type="HAMAP" id="MF_00514">
    <property type="entry name" value="Ribosomal_bL35"/>
    <property type="match status" value="1"/>
</dbReference>
<dbReference type="InterPro" id="IPR001706">
    <property type="entry name" value="Ribosomal_bL35"/>
</dbReference>
<dbReference type="InterPro" id="IPR021137">
    <property type="entry name" value="Ribosomal_bL35-like"/>
</dbReference>
<dbReference type="InterPro" id="IPR018265">
    <property type="entry name" value="Ribosomal_bL35_CS"/>
</dbReference>
<dbReference type="InterPro" id="IPR037229">
    <property type="entry name" value="Ribosomal_bL35_sf"/>
</dbReference>
<dbReference type="NCBIfam" id="TIGR00001">
    <property type="entry name" value="rpmI_bact"/>
    <property type="match status" value="1"/>
</dbReference>
<dbReference type="PANTHER" id="PTHR33343">
    <property type="entry name" value="54S RIBOSOMAL PROTEIN BL35M"/>
    <property type="match status" value="1"/>
</dbReference>
<dbReference type="PANTHER" id="PTHR33343:SF1">
    <property type="entry name" value="LARGE RIBOSOMAL SUBUNIT PROTEIN BL35M"/>
    <property type="match status" value="1"/>
</dbReference>
<dbReference type="Pfam" id="PF01632">
    <property type="entry name" value="Ribosomal_L35p"/>
    <property type="match status" value="1"/>
</dbReference>
<dbReference type="PRINTS" id="PR00064">
    <property type="entry name" value="RIBOSOMALL35"/>
</dbReference>
<dbReference type="SUPFAM" id="SSF143034">
    <property type="entry name" value="L35p-like"/>
    <property type="match status" value="1"/>
</dbReference>
<dbReference type="PROSITE" id="PS00936">
    <property type="entry name" value="RIBOSOMAL_L35"/>
    <property type="match status" value="1"/>
</dbReference>
<gene>
    <name evidence="1" type="primary">rpmI</name>
    <name type="ordered locus">HD_1800</name>
</gene>
<organism>
    <name type="scientific">Haemophilus ducreyi (strain 35000HP / ATCC 700724)</name>
    <dbReference type="NCBI Taxonomy" id="233412"/>
    <lineage>
        <taxon>Bacteria</taxon>
        <taxon>Pseudomonadati</taxon>
        <taxon>Pseudomonadota</taxon>
        <taxon>Gammaproteobacteria</taxon>
        <taxon>Pasteurellales</taxon>
        <taxon>Pasteurellaceae</taxon>
        <taxon>Haemophilus</taxon>
    </lineage>
</organism>
<keyword id="KW-1185">Reference proteome</keyword>
<keyword id="KW-0687">Ribonucleoprotein</keyword>
<keyword id="KW-0689">Ribosomal protein</keyword>
<accession>Q7VKS1</accession>